<dbReference type="EC" id="2.8.4.3" evidence="1"/>
<dbReference type="EMBL" id="AM286280">
    <property type="protein sequence ID" value="CAL08634.1"/>
    <property type="molecule type" value="Genomic_DNA"/>
</dbReference>
<dbReference type="RefSeq" id="WP_003023392.1">
    <property type="nucleotide sequence ID" value="NC_008245.1"/>
</dbReference>
<dbReference type="SMR" id="Q14IK5"/>
<dbReference type="GeneID" id="75265204"/>
<dbReference type="KEGG" id="ftf:FTF0618c"/>
<dbReference type="HOGENOM" id="CLU_018697_2_0_6"/>
<dbReference type="GO" id="GO:0005829">
    <property type="term" value="C:cytosol"/>
    <property type="evidence" value="ECO:0007669"/>
    <property type="project" value="TreeGrafter"/>
</dbReference>
<dbReference type="GO" id="GO:0051539">
    <property type="term" value="F:4 iron, 4 sulfur cluster binding"/>
    <property type="evidence" value="ECO:0007669"/>
    <property type="project" value="UniProtKB-UniRule"/>
</dbReference>
<dbReference type="GO" id="GO:0046872">
    <property type="term" value="F:metal ion binding"/>
    <property type="evidence" value="ECO:0007669"/>
    <property type="project" value="UniProtKB-KW"/>
</dbReference>
<dbReference type="GO" id="GO:0035597">
    <property type="term" value="F:N6-isopentenyladenosine methylthiotransferase activity"/>
    <property type="evidence" value="ECO:0007669"/>
    <property type="project" value="TreeGrafter"/>
</dbReference>
<dbReference type="CDD" id="cd01335">
    <property type="entry name" value="Radical_SAM"/>
    <property type="match status" value="1"/>
</dbReference>
<dbReference type="FunFam" id="3.40.50.12160:FF:000001">
    <property type="entry name" value="tRNA-2-methylthio-N(6)-dimethylallyladenosine synthase"/>
    <property type="match status" value="1"/>
</dbReference>
<dbReference type="FunFam" id="3.80.30.20:FF:000001">
    <property type="entry name" value="tRNA-2-methylthio-N(6)-dimethylallyladenosine synthase 2"/>
    <property type="match status" value="1"/>
</dbReference>
<dbReference type="Gene3D" id="3.40.50.12160">
    <property type="entry name" value="Methylthiotransferase, N-terminal domain"/>
    <property type="match status" value="1"/>
</dbReference>
<dbReference type="Gene3D" id="3.80.30.20">
    <property type="entry name" value="tm_1862 like domain"/>
    <property type="match status" value="1"/>
</dbReference>
<dbReference type="HAMAP" id="MF_01864">
    <property type="entry name" value="tRNA_metthiotr_MiaB"/>
    <property type="match status" value="1"/>
</dbReference>
<dbReference type="InterPro" id="IPR006638">
    <property type="entry name" value="Elp3/MiaA/NifB-like_rSAM"/>
</dbReference>
<dbReference type="InterPro" id="IPR005839">
    <property type="entry name" value="Methylthiotransferase"/>
</dbReference>
<dbReference type="InterPro" id="IPR020612">
    <property type="entry name" value="Methylthiotransferase_CS"/>
</dbReference>
<dbReference type="InterPro" id="IPR013848">
    <property type="entry name" value="Methylthiotransferase_N"/>
</dbReference>
<dbReference type="InterPro" id="IPR038135">
    <property type="entry name" value="Methylthiotransferase_N_sf"/>
</dbReference>
<dbReference type="InterPro" id="IPR006463">
    <property type="entry name" value="MiaB_methiolase"/>
</dbReference>
<dbReference type="InterPro" id="IPR007197">
    <property type="entry name" value="rSAM"/>
</dbReference>
<dbReference type="InterPro" id="IPR023404">
    <property type="entry name" value="rSAM_horseshoe"/>
</dbReference>
<dbReference type="InterPro" id="IPR002792">
    <property type="entry name" value="TRAM_dom"/>
</dbReference>
<dbReference type="NCBIfam" id="TIGR01574">
    <property type="entry name" value="miaB-methiolase"/>
    <property type="match status" value="1"/>
</dbReference>
<dbReference type="NCBIfam" id="TIGR00089">
    <property type="entry name" value="MiaB/RimO family radical SAM methylthiotransferase"/>
    <property type="match status" value="1"/>
</dbReference>
<dbReference type="PANTHER" id="PTHR43020">
    <property type="entry name" value="CDK5 REGULATORY SUBUNIT-ASSOCIATED PROTEIN 1"/>
    <property type="match status" value="1"/>
</dbReference>
<dbReference type="PANTHER" id="PTHR43020:SF2">
    <property type="entry name" value="MITOCHONDRIAL TRNA METHYLTHIOTRANSFERASE CDK5RAP1"/>
    <property type="match status" value="1"/>
</dbReference>
<dbReference type="Pfam" id="PF04055">
    <property type="entry name" value="Radical_SAM"/>
    <property type="match status" value="1"/>
</dbReference>
<dbReference type="Pfam" id="PF01938">
    <property type="entry name" value="TRAM"/>
    <property type="match status" value="1"/>
</dbReference>
<dbReference type="Pfam" id="PF00919">
    <property type="entry name" value="UPF0004"/>
    <property type="match status" value="1"/>
</dbReference>
<dbReference type="SFLD" id="SFLDF00273">
    <property type="entry name" value="(dimethylallyl)adenosine_tRNA"/>
    <property type="match status" value="1"/>
</dbReference>
<dbReference type="SFLD" id="SFLDG01082">
    <property type="entry name" value="B12-binding_domain_containing"/>
    <property type="match status" value="1"/>
</dbReference>
<dbReference type="SFLD" id="SFLDS00029">
    <property type="entry name" value="Radical_SAM"/>
    <property type="match status" value="1"/>
</dbReference>
<dbReference type="SMART" id="SM00729">
    <property type="entry name" value="Elp3"/>
    <property type="match status" value="1"/>
</dbReference>
<dbReference type="SUPFAM" id="SSF102114">
    <property type="entry name" value="Radical SAM enzymes"/>
    <property type="match status" value="1"/>
</dbReference>
<dbReference type="PROSITE" id="PS51449">
    <property type="entry name" value="MTTASE_N"/>
    <property type="match status" value="1"/>
</dbReference>
<dbReference type="PROSITE" id="PS01278">
    <property type="entry name" value="MTTASE_RADICAL"/>
    <property type="match status" value="1"/>
</dbReference>
<dbReference type="PROSITE" id="PS51918">
    <property type="entry name" value="RADICAL_SAM"/>
    <property type="match status" value="1"/>
</dbReference>
<dbReference type="PROSITE" id="PS50926">
    <property type="entry name" value="TRAM"/>
    <property type="match status" value="1"/>
</dbReference>
<evidence type="ECO:0000255" key="1">
    <source>
        <dbReference type="HAMAP-Rule" id="MF_01864"/>
    </source>
</evidence>
<evidence type="ECO:0000255" key="2">
    <source>
        <dbReference type="PROSITE-ProRule" id="PRU01266"/>
    </source>
</evidence>
<feature type="chain" id="PRO_0000374309" description="tRNA-2-methylthio-N(6)-dimethylallyladenosine synthase">
    <location>
        <begin position="1"/>
        <end position="442"/>
    </location>
</feature>
<feature type="domain" description="MTTase N-terminal" evidence="1">
    <location>
        <begin position="5"/>
        <end position="122"/>
    </location>
</feature>
<feature type="domain" description="Radical SAM core" evidence="2">
    <location>
        <begin position="145"/>
        <end position="378"/>
    </location>
</feature>
<feature type="domain" description="TRAM" evidence="1">
    <location>
        <begin position="380"/>
        <end position="442"/>
    </location>
</feature>
<feature type="binding site" evidence="1">
    <location>
        <position position="14"/>
    </location>
    <ligand>
        <name>[4Fe-4S] cluster</name>
        <dbReference type="ChEBI" id="CHEBI:49883"/>
        <label>1</label>
    </ligand>
</feature>
<feature type="binding site" evidence="1">
    <location>
        <position position="51"/>
    </location>
    <ligand>
        <name>[4Fe-4S] cluster</name>
        <dbReference type="ChEBI" id="CHEBI:49883"/>
        <label>1</label>
    </ligand>
</feature>
<feature type="binding site" evidence="1">
    <location>
        <position position="85"/>
    </location>
    <ligand>
        <name>[4Fe-4S] cluster</name>
        <dbReference type="ChEBI" id="CHEBI:49883"/>
        <label>1</label>
    </ligand>
</feature>
<feature type="binding site" evidence="1">
    <location>
        <position position="159"/>
    </location>
    <ligand>
        <name>[4Fe-4S] cluster</name>
        <dbReference type="ChEBI" id="CHEBI:49883"/>
        <label>2</label>
        <note>4Fe-4S-S-AdoMet</note>
    </ligand>
</feature>
<feature type="binding site" evidence="1">
    <location>
        <position position="163"/>
    </location>
    <ligand>
        <name>[4Fe-4S] cluster</name>
        <dbReference type="ChEBI" id="CHEBI:49883"/>
        <label>2</label>
        <note>4Fe-4S-S-AdoMet</note>
    </ligand>
</feature>
<feature type="binding site" evidence="1">
    <location>
        <position position="166"/>
    </location>
    <ligand>
        <name>[4Fe-4S] cluster</name>
        <dbReference type="ChEBI" id="CHEBI:49883"/>
        <label>2</label>
        <note>4Fe-4S-S-AdoMet</note>
    </ligand>
</feature>
<accession>Q14IK5</accession>
<comment type="function">
    <text evidence="1">Catalyzes the methylthiolation of N6-(dimethylallyl)adenosine (i(6)A), leading to the formation of 2-methylthio-N6-(dimethylallyl)adenosine (ms(2)i(6)A) at position 37 in tRNAs that read codons beginning with uridine.</text>
</comment>
<comment type="catalytic activity">
    <reaction evidence="1">
        <text>N(6)-dimethylallyladenosine(37) in tRNA + (sulfur carrier)-SH + AH2 + 2 S-adenosyl-L-methionine = 2-methylsulfanyl-N(6)-dimethylallyladenosine(37) in tRNA + (sulfur carrier)-H + 5'-deoxyadenosine + L-methionine + A + S-adenosyl-L-homocysteine + 2 H(+)</text>
        <dbReference type="Rhea" id="RHEA:37067"/>
        <dbReference type="Rhea" id="RHEA-COMP:10375"/>
        <dbReference type="Rhea" id="RHEA-COMP:10376"/>
        <dbReference type="Rhea" id="RHEA-COMP:14737"/>
        <dbReference type="Rhea" id="RHEA-COMP:14739"/>
        <dbReference type="ChEBI" id="CHEBI:13193"/>
        <dbReference type="ChEBI" id="CHEBI:15378"/>
        <dbReference type="ChEBI" id="CHEBI:17319"/>
        <dbReference type="ChEBI" id="CHEBI:17499"/>
        <dbReference type="ChEBI" id="CHEBI:29917"/>
        <dbReference type="ChEBI" id="CHEBI:57844"/>
        <dbReference type="ChEBI" id="CHEBI:57856"/>
        <dbReference type="ChEBI" id="CHEBI:59789"/>
        <dbReference type="ChEBI" id="CHEBI:64428"/>
        <dbReference type="ChEBI" id="CHEBI:74415"/>
        <dbReference type="ChEBI" id="CHEBI:74417"/>
        <dbReference type="EC" id="2.8.4.3"/>
    </reaction>
</comment>
<comment type="cofactor">
    <cofactor evidence="1">
        <name>[4Fe-4S] cluster</name>
        <dbReference type="ChEBI" id="CHEBI:49883"/>
    </cofactor>
    <text evidence="1">Binds 2 [4Fe-4S] clusters. One cluster is coordinated with 3 cysteines and an exchangeable S-adenosyl-L-methionine.</text>
</comment>
<comment type="subunit">
    <text evidence="1">Monomer.</text>
</comment>
<comment type="subcellular location">
    <subcellularLocation>
        <location evidence="1">Cytoplasm</location>
    </subcellularLocation>
</comment>
<comment type="similarity">
    <text evidence="1">Belongs to the methylthiotransferase family. MiaB subfamily.</text>
</comment>
<reference key="1">
    <citation type="journal article" date="2007" name="PLoS ONE">
        <title>Genome sequencing shows that European isolates of Francisella tularensis subspecies tularensis are almost identical to US laboratory strain Schu S4.</title>
        <authorList>
            <person name="Chaudhuri R.R."/>
            <person name="Ren C.-P."/>
            <person name="Desmond L."/>
            <person name="Vincent G.A."/>
            <person name="Silman N.J."/>
            <person name="Brehm J.K."/>
            <person name="Elmore M.J."/>
            <person name="Hudson M.J."/>
            <person name="Forsman M."/>
            <person name="Isherwood K.E."/>
            <person name="Gurycova D."/>
            <person name="Minton N.P."/>
            <person name="Titball R.W."/>
            <person name="Pallen M.J."/>
            <person name="Vipond R."/>
        </authorList>
    </citation>
    <scope>NUCLEOTIDE SEQUENCE [LARGE SCALE GENOMIC DNA]</scope>
    <source>
        <strain>FSC 198</strain>
    </source>
</reference>
<name>MIAB_FRAT1</name>
<organism>
    <name type="scientific">Francisella tularensis subsp. tularensis (strain FSC 198)</name>
    <dbReference type="NCBI Taxonomy" id="393115"/>
    <lineage>
        <taxon>Bacteria</taxon>
        <taxon>Pseudomonadati</taxon>
        <taxon>Pseudomonadota</taxon>
        <taxon>Gammaproteobacteria</taxon>
        <taxon>Thiotrichales</taxon>
        <taxon>Francisellaceae</taxon>
        <taxon>Francisella</taxon>
    </lineage>
</organism>
<protein>
    <recommendedName>
        <fullName evidence="1">tRNA-2-methylthio-N(6)-dimethylallyladenosine synthase</fullName>
        <ecNumber evidence="1">2.8.4.3</ecNumber>
    </recommendedName>
    <alternativeName>
        <fullName evidence="1">(Dimethylallyl)adenosine tRNA methylthiotransferase MiaB</fullName>
    </alternativeName>
    <alternativeName>
        <fullName evidence="1">tRNA-i(6)A37 methylthiotransferase</fullName>
    </alternativeName>
</protein>
<sequence length="442" mass="50178">MKEQKKVFIKTLGCQMNEYDSARMHEVLNEHFDTVKTDDYKDADIILINTCSIREKAQEKVFHELGRWKGLKKTNEDLIIGVGGCVASQEGENIIKRAPFVDLVFGPQTIHRLPEMIKQKQKTQQSQVDISFPEVEKFDYLPEPKAEGAKAYVSIMEGCDKYCSYCVVPYTRGPEVNRPFEDVLAECAILAEQGVKEITLLGQNVNHYLGPMENGQTADLALLIHFIAEIDGIERIRFTTSHPVEFSQNLIDAYATVPELANHLHLPVQHGSDRILINMKRNHTILEFKQKIRKLRAIRPDITISSDFIVGFPGETEEDFQKLLDLVKEINFDQSFSFIYSKRPGTPAADLPDDTPMEVKKDRLKRLQDLLNSNAQIISRQMVGTNQRILVDGTSKKDDNILSGRTENNRVVNFKGDKSLIGQFAMVKITESLPNSLRGELI</sequence>
<proteinExistence type="inferred from homology"/>
<gene>
    <name evidence="1" type="primary">miaB</name>
    <name type="ordered locus">FTF0618c</name>
</gene>
<keyword id="KW-0004">4Fe-4S</keyword>
<keyword id="KW-0963">Cytoplasm</keyword>
<keyword id="KW-0408">Iron</keyword>
<keyword id="KW-0411">Iron-sulfur</keyword>
<keyword id="KW-0479">Metal-binding</keyword>
<keyword id="KW-0949">S-adenosyl-L-methionine</keyword>
<keyword id="KW-0808">Transferase</keyword>
<keyword id="KW-0819">tRNA processing</keyword>